<reference key="1">
    <citation type="journal article" date="2002" name="Nature">
        <title>The genome sequence of Schizosaccharomyces pombe.</title>
        <authorList>
            <person name="Wood V."/>
            <person name="Gwilliam R."/>
            <person name="Rajandream M.A."/>
            <person name="Lyne M.H."/>
            <person name="Lyne R."/>
            <person name="Stewart A."/>
            <person name="Sgouros J.G."/>
            <person name="Peat N."/>
            <person name="Hayles J."/>
            <person name="Baker S.G."/>
            <person name="Basham D."/>
            <person name="Bowman S."/>
            <person name="Brooks K."/>
            <person name="Brown D."/>
            <person name="Brown S."/>
            <person name="Chillingworth T."/>
            <person name="Churcher C.M."/>
            <person name="Collins M."/>
            <person name="Connor R."/>
            <person name="Cronin A."/>
            <person name="Davis P."/>
            <person name="Feltwell T."/>
            <person name="Fraser A."/>
            <person name="Gentles S."/>
            <person name="Goble A."/>
            <person name="Hamlin N."/>
            <person name="Harris D.E."/>
            <person name="Hidalgo J."/>
            <person name="Hodgson G."/>
            <person name="Holroyd S."/>
            <person name="Hornsby T."/>
            <person name="Howarth S."/>
            <person name="Huckle E.J."/>
            <person name="Hunt S."/>
            <person name="Jagels K."/>
            <person name="James K.D."/>
            <person name="Jones L."/>
            <person name="Jones M."/>
            <person name="Leather S."/>
            <person name="McDonald S."/>
            <person name="McLean J."/>
            <person name="Mooney P."/>
            <person name="Moule S."/>
            <person name="Mungall K.L."/>
            <person name="Murphy L.D."/>
            <person name="Niblett D."/>
            <person name="Odell C."/>
            <person name="Oliver K."/>
            <person name="O'Neil S."/>
            <person name="Pearson D."/>
            <person name="Quail M.A."/>
            <person name="Rabbinowitsch E."/>
            <person name="Rutherford K.M."/>
            <person name="Rutter S."/>
            <person name="Saunders D."/>
            <person name="Seeger K."/>
            <person name="Sharp S."/>
            <person name="Skelton J."/>
            <person name="Simmonds M.N."/>
            <person name="Squares R."/>
            <person name="Squares S."/>
            <person name="Stevens K."/>
            <person name="Taylor K."/>
            <person name="Taylor R.G."/>
            <person name="Tivey A."/>
            <person name="Walsh S.V."/>
            <person name="Warren T."/>
            <person name="Whitehead S."/>
            <person name="Woodward J.R."/>
            <person name="Volckaert G."/>
            <person name="Aert R."/>
            <person name="Robben J."/>
            <person name="Grymonprez B."/>
            <person name="Weltjens I."/>
            <person name="Vanstreels E."/>
            <person name="Rieger M."/>
            <person name="Schaefer M."/>
            <person name="Mueller-Auer S."/>
            <person name="Gabel C."/>
            <person name="Fuchs M."/>
            <person name="Duesterhoeft A."/>
            <person name="Fritzc C."/>
            <person name="Holzer E."/>
            <person name="Moestl D."/>
            <person name="Hilbert H."/>
            <person name="Borzym K."/>
            <person name="Langer I."/>
            <person name="Beck A."/>
            <person name="Lehrach H."/>
            <person name="Reinhardt R."/>
            <person name="Pohl T.M."/>
            <person name="Eger P."/>
            <person name="Zimmermann W."/>
            <person name="Wedler H."/>
            <person name="Wambutt R."/>
            <person name="Purnelle B."/>
            <person name="Goffeau A."/>
            <person name="Cadieu E."/>
            <person name="Dreano S."/>
            <person name="Gloux S."/>
            <person name="Lelaure V."/>
            <person name="Mottier S."/>
            <person name="Galibert F."/>
            <person name="Aves S.J."/>
            <person name="Xiang Z."/>
            <person name="Hunt C."/>
            <person name="Moore K."/>
            <person name="Hurst S.M."/>
            <person name="Lucas M."/>
            <person name="Rochet M."/>
            <person name="Gaillardin C."/>
            <person name="Tallada V.A."/>
            <person name="Garzon A."/>
            <person name="Thode G."/>
            <person name="Daga R.R."/>
            <person name="Cruzado L."/>
            <person name="Jimenez J."/>
            <person name="Sanchez M."/>
            <person name="del Rey F."/>
            <person name="Benito J."/>
            <person name="Dominguez A."/>
            <person name="Revuelta J.L."/>
            <person name="Moreno S."/>
            <person name="Armstrong J."/>
            <person name="Forsburg S.L."/>
            <person name="Cerutti L."/>
            <person name="Lowe T."/>
            <person name="McCombie W.R."/>
            <person name="Paulsen I."/>
            <person name="Potashkin J."/>
            <person name="Shpakovski G.V."/>
            <person name="Ussery D."/>
            <person name="Barrell B.G."/>
            <person name="Nurse P."/>
        </authorList>
    </citation>
    <scope>NUCLEOTIDE SEQUENCE [LARGE SCALE GENOMIC DNA]</scope>
    <source>
        <strain>972 / ATCC 24843</strain>
    </source>
</reference>
<reference key="2">
    <citation type="journal article" date="2006" name="Nat. Biotechnol.">
        <title>ORFeome cloning and global analysis of protein localization in the fission yeast Schizosaccharomyces pombe.</title>
        <authorList>
            <person name="Matsuyama A."/>
            <person name="Arai R."/>
            <person name="Yashiroda Y."/>
            <person name="Shirai A."/>
            <person name="Kamata A."/>
            <person name="Sekido S."/>
            <person name="Kobayashi Y."/>
            <person name="Hashimoto A."/>
            <person name="Hamamoto M."/>
            <person name="Hiraoka Y."/>
            <person name="Horinouchi S."/>
            <person name="Yoshida M."/>
        </authorList>
    </citation>
    <scope>SUBCELLULAR LOCATION [LARGE SCALE ANALYSIS]</scope>
</reference>
<gene>
    <name type="primary">yea4</name>
    <name type="ORF">SPBC1734.09</name>
</gene>
<name>YEA4_SCHPO</name>
<protein>
    <recommendedName>
        <fullName>UDP-N-acetylglucosamine transporter yea4</fullName>
    </recommendedName>
</protein>
<dbReference type="EMBL" id="CU329671">
    <property type="protein sequence ID" value="CAA21303.1"/>
    <property type="molecule type" value="Genomic_DNA"/>
</dbReference>
<dbReference type="PIR" id="T39656">
    <property type="entry name" value="T39656"/>
</dbReference>
<dbReference type="RefSeq" id="NP_595426.1">
    <property type="nucleotide sequence ID" value="NM_001021334.2"/>
</dbReference>
<dbReference type="SMR" id="O74750"/>
<dbReference type="BioGRID" id="276169">
    <property type="interactions" value="8"/>
</dbReference>
<dbReference type="FunCoup" id="O74750">
    <property type="interactions" value="130"/>
</dbReference>
<dbReference type="STRING" id="284812.O74750"/>
<dbReference type="PaxDb" id="4896-SPBC1734.09.1"/>
<dbReference type="EnsemblFungi" id="SPBC1734.09.1">
    <property type="protein sequence ID" value="SPBC1734.09.1:pep"/>
    <property type="gene ID" value="SPBC1734.09"/>
</dbReference>
<dbReference type="GeneID" id="2539611"/>
<dbReference type="KEGG" id="spo:2539611"/>
<dbReference type="PomBase" id="SPBC1734.09">
    <property type="gene designation" value="yea4"/>
</dbReference>
<dbReference type="VEuPathDB" id="FungiDB:SPBC1734.09"/>
<dbReference type="eggNOG" id="KOG1583">
    <property type="taxonomic scope" value="Eukaryota"/>
</dbReference>
<dbReference type="HOGENOM" id="CLU_033007_1_1_1"/>
<dbReference type="InParanoid" id="O74750"/>
<dbReference type="OMA" id="NPFTGWH"/>
<dbReference type="PhylomeDB" id="O74750"/>
<dbReference type="Reactome" id="R-SPO-727802">
    <property type="pathway name" value="Transport of nucleotide sugars"/>
</dbReference>
<dbReference type="PRO" id="PR:O74750"/>
<dbReference type="Proteomes" id="UP000002485">
    <property type="component" value="Chromosome II"/>
</dbReference>
<dbReference type="GO" id="GO:0051286">
    <property type="term" value="C:cell tip"/>
    <property type="evidence" value="ECO:0007005"/>
    <property type="project" value="PomBase"/>
</dbReference>
<dbReference type="GO" id="GO:0005783">
    <property type="term" value="C:endoplasmic reticulum"/>
    <property type="evidence" value="ECO:0007005"/>
    <property type="project" value="PomBase"/>
</dbReference>
<dbReference type="GO" id="GO:0005789">
    <property type="term" value="C:endoplasmic reticulum membrane"/>
    <property type="evidence" value="ECO:0000269"/>
    <property type="project" value="PomBase"/>
</dbReference>
<dbReference type="GO" id="GO:0000139">
    <property type="term" value="C:Golgi membrane"/>
    <property type="evidence" value="ECO:0000318"/>
    <property type="project" value="GO_Central"/>
</dbReference>
<dbReference type="GO" id="GO:0005462">
    <property type="term" value="F:UDP-N-acetylglucosamine transmembrane transporter activity"/>
    <property type="evidence" value="ECO:0000318"/>
    <property type="project" value="GO_Central"/>
</dbReference>
<dbReference type="GO" id="GO:0005464">
    <property type="term" value="F:UDP-xylose transmembrane transporter activity"/>
    <property type="evidence" value="ECO:0000318"/>
    <property type="project" value="GO_Central"/>
</dbReference>
<dbReference type="GO" id="GO:1990569">
    <property type="term" value="P:UDP-N-acetylglucosamine transmembrane transport"/>
    <property type="evidence" value="ECO:0000318"/>
    <property type="project" value="GO_Central"/>
</dbReference>
<dbReference type="InterPro" id="IPR013657">
    <property type="entry name" value="SCL35B1-4/HUT1"/>
</dbReference>
<dbReference type="NCBIfam" id="TIGR00803">
    <property type="entry name" value="nst"/>
    <property type="match status" value="1"/>
</dbReference>
<dbReference type="PANTHER" id="PTHR10778:SF4">
    <property type="entry name" value="NUCLEOTIDE SUGAR TRANSPORTER SLC35B4"/>
    <property type="match status" value="1"/>
</dbReference>
<dbReference type="PANTHER" id="PTHR10778">
    <property type="entry name" value="SOLUTE CARRIER FAMILY 35 MEMBER B"/>
    <property type="match status" value="1"/>
</dbReference>
<dbReference type="Pfam" id="PF08449">
    <property type="entry name" value="UAA"/>
    <property type="match status" value="1"/>
</dbReference>
<dbReference type="SUPFAM" id="SSF103481">
    <property type="entry name" value="Multidrug resistance efflux transporter EmrE"/>
    <property type="match status" value="1"/>
</dbReference>
<accession>O74750</accession>
<proteinExistence type="inferred from homology"/>
<organism>
    <name type="scientific">Schizosaccharomyces pombe (strain 972 / ATCC 24843)</name>
    <name type="common">Fission yeast</name>
    <dbReference type="NCBI Taxonomy" id="284812"/>
    <lineage>
        <taxon>Eukaryota</taxon>
        <taxon>Fungi</taxon>
        <taxon>Dikarya</taxon>
        <taxon>Ascomycota</taxon>
        <taxon>Taphrinomycotina</taxon>
        <taxon>Schizosaccharomycetes</taxon>
        <taxon>Schizosaccharomycetales</taxon>
        <taxon>Schizosaccharomycetaceae</taxon>
        <taxon>Schizosaccharomyces</taxon>
    </lineage>
</organism>
<comment type="function">
    <text evidence="1">Sugar transporter that specifically mediates the transport of UDP-N-acetylglucosamine (UDP-GlcNAc) and is required for cell wall chitin synthesis.</text>
</comment>
<comment type="subcellular location">
    <subcellularLocation>
        <location evidence="3">Endoplasmic reticulum</location>
    </subcellularLocation>
    <subcellularLocation>
        <location evidence="3">Endoplasmic reticulum membrane</location>
        <topology evidence="3">Multi-pass membrane protein</topology>
    </subcellularLocation>
</comment>
<comment type="similarity">
    <text evidence="4">Belongs to the nucleotide-sugar transporter family. SLC35B subfamily.</text>
</comment>
<keyword id="KW-0256">Endoplasmic reticulum</keyword>
<keyword id="KW-0472">Membrane</keyword>
<keyword id="KW-1185">Reference proteome</keyword>
<keyword id="KW-0762">Sugar transport</keyword>
<keyword id="KW-0812">Transmembrane</keyword>
<keyword id="KW-1133">Transmembrane helix</keyword>
<keyword id="KW-0813">Transport</keyword>
<sequence length="316" mass="34848">MIASALSFIFGGCCSNAYALEALVREFPSSGILITFSQFILITIEGLIYFLLNDVQSLKHPKVPRKRWFVVVVMFFAINVLNNVALGFDISVPVHIILRSSGPLTTMAVGRILAGKRYSSLQIGSVFILTIGVIIATLGNAKDLHLHVESMTRFGIGFTILVITQILGAIMGLVLENTYRIYGSDWRESLFYTHALSLPFFLFLLRPIRSQWNDLFAIHTKGFLNLPSGVWYLCFNTLAQYFCVRGVNALGAETSALTVSVVLNVRKFVSLCLSLILFENEMGPAVKFGALLVFGSSAVYASARSKPKTNGLKKND</sequence>
<evidence type="ECO:0000250" key="1"/>
<evidence type="ECO:0000255" key="2"/>
<evidence type="ECO:0000269" key="3">
    <source>
    </source>
</evidence>
<evidence type="ECO:0000305" key="4"/>
<feature type="chain" id="PRO_0000339147" description="UDP-N-acetylglucosamine transporter yea4">
    <location>
        <begin position="1"/>
        <end position="316"/>
    </location>
</feature>
<feature type="topological domain" description="Cytoplasmic" evidence="2">
    <location>
        <begin position="1"/>
        <end position="3"/>
    </location>
</feature>
<feature type="transmembrane region" description="Helical" evidence="2">
    <location>
        <begin position="4"/>
        <end position="24"/>
    </location>
</feature>
<feature type="topological domain" description="Lumenal" evidence="2">
    <location>
        <begin position="25"/>
        <end position="31"/>
    </location>
</feature>
<feature type="transmembrane region" description="Helical" evidence="2">
    <location>
        <begin position="32"/>
        <end position="52"/>
    </location>
</feature>
<feature type="topological domain" description="Cytoplasmic" evidence="2">
    <location>
        <begin position="53"/>
        <end position="67"/>
    </location>
</feature>
<feature type="transmembrane region" description="Helical" evidence="2">
    <location>
        <begin position="68"/>
        <end position="88"/>
    </location>
</feature>
<feature type="topological domain" description="Lumenal" evidence="2">
    <location>
        <begin position="89"/>
        <end position="120"/>
    </location>
</feature>
<feature type="transmembrane region" description="Helical" evidence="2">
    <location>
        <begin position="121"/>
        <end position="141"/>
    </location>
</feature>
<feature type="topological domain" description="Cytoplasmic" evidence="2">
    <location>
        <begin position="142"/>
        <end position="153"/>
    </location>
</feature>
<feature type="transmembrane region" description="Helical" evidence="2">
    <location>
        <begin position="154"/>
        <end position="174"/>
    </location>
</feature>
<feature type="topological domain" description="Lumenal" evidence="2">
    <location>
        <begin position="175"/>
        <end position="187"/>
    </location>
</feature>
<feature type="transmembrane region" description="Helical" evidence="2">
    <location>
        <begin position="188"/>
        <end position="208"/>
    </location>
</feature>
<feature type="topological domain" description="Cytoplasmic" evidence="2">
    <location>
        <begin position="209"/>
        <end position="214"/>
    </location>
</feature>
<feature type="transmembrane region" description="Helical" evidence="2">
    <location>
        <begin position="215"/>
        <end position="235"/>
    </location>
</feature>
<feature type="topological domain" description="Lumenal" evidence="2">
    <location>
        <begin position="236"/>
        <end position="274"/>
    </location>
</feature>
<feature type="transmembrane region" description="Helical" evidence="2">
    <location>
        <begin position="275"/>
        <end position="295"/>
    </location>
</feature>
<feature type="topological domain" description="Cytoplasmic" evidence="2">
    <location>
        <begin position="296"/>
        <end position="316"/>
    </location>
</feature>